<protein>
    <recommendedName>
        <fullName evidence="5">Conotoxin PnMRCL-022</fullName>
    </recommendedName>
</protein>
<keyword id="KW-0165">Cleavage on pair of basic residues</keyword>
<keyword id="KW-1015">Disulfide bond</keyword>
<keyword id="KW-0528">Neurotoxin</keyword>
<keyword id="KW-0964">Secreted</keyword>
<keyword id="KW-0732">Signal</keyword>
<keyword id="KW-0800">Toxin</keyword>
<accession>Q9BPH2</accession>
<dbReference type="EMBL" id="AF214955">
    <property type="protein sequence ID" value="AAG60383.1"/>
    <property type="molecule type" value="mRNA"/>
</dbReference>
<dbReference type="ConoServer" id="642">
    <property type="toxin name" value="Pn5.1 precursor"/>
</dbReference>
<dbReference type="GO" id="GO:0005576">
    <property type="term" value="C:extracellular region"/>
    <property type="evidence" value="ECO:0007669"/>
    <property type="project" value="UniProtKB-SubCell"/>
</dbReference>
<dbReference type="GO" id="GO:0090729">
    <property type="term" value="F:toxin activity"/>
    <property type="evidence" value="ECO:0007669"/>
    <property type="project" value="UniProtKB-KW"/>
</dbReference>
<dbReference type="InterPro" id="IPR031565">
    <property type="entry name" value="T-conotoxin"/>
</dbReference>
<dbReference type="Pfam" id="PF16981">
    <property type="entry name" value="Chi-conotoxin"/>
    <property type="match status" value="1"/>
</dbReference>
<reference key="1">
    <citation type="journal article" date="2001" name="Mol. Biol. Evol.">
        <title>Mechanisms for evolving hypervariability: the case of conopeptides.</title>
        <authorList>
            <person name="Conticello S.G."/>
            <person name="Gilad Y."/>
            <person name="Avidan N."/>
            <person name="Ben-Asher E."/>
            <person name="Levy Z."/>
            <person name="Fainzilber M."/>
        </authorList>
    </citation>
    <scope>NUCLEOTIDE SEQUENCE [MRNA]</scope>
    <source>
        <tissue>Venom duct</tissue>
    </source>
</reference>
<name>CT5M_CONPE</name>
<organism>
    <name type="scientific">Conus pennaceus</name>
    <name type="common">Feathered cone</name>
    <name type="synonym">Conus episcopus</name>
    <dbReference type="NCBI Taxonomy" id="37335"/>
    <lineage>
        <taxon>Eukaryota</taxon>
        <taxon>Metazoa</taxon>
        <taxon>Spiralia</taxon>
        <taxon>Lophotrochozoa</taxon>
        <taxon>Mollusca</taxon>
        <taxon>Gastropoda</taxon>
        <taxon>Caenogastropoda</taxon>
        <taxon>Neogastropoda</taxon>
        <taxon>Conoidea</taxon>
        <taxon>Conidae</taxon>
        <taxon>Conus</taxon>
        <taxon>Darioconus</taxon>
    </lineage>
</organism>
<sequence length="60" mass="7082">MRCLPVFVILLLLIASTPSVNARPKTKDLASFHDNAKRTQHIFWSKRNCCIYENWCCEWI</sequence>
<proteinExistence type="inferred from homology"/>
<comment type="subcellular location">
    <subcellularLocation>
        <location evidence="4">Secreted</location>
    </subcellularLocation>
</comment>
<comment type="tissue specificity">
    <text evidence="4">Expressed by the venom duct.</text>
</comment>
<comment type="domain">
    <text evidence="3">The cysteine framework is V (CC-CC).</text>
</comment>
<comment type="PTM">
    <text evidence="3">Contains 2 disulfide bonds that can be either 'C1-C3, C2-C4' or 'C1-C4, C2-C3', since these disulfide connectivities have been observed for conotoxins with cysteine framework V (for examples, see AC P0DQQ7 and AC P81755).</text>
</comment>
<comment type="similarity">
    <text evidence="3">Belongs to the conotoxin T superfamily.</text>
</comment>
<feature type="signal peptide" evidence="2">
    <location>
        <begin position="1"/>
        <end position="22"/>
    </location>
</feature>
<feature type="propeptide" id="PRO_0000404973" evidence="1">
    <location>
        <begin position="23"/>
        <end position="45"/>
    </location>
</feature>
<feature type="peptide" id="PRO_0000404974" description="Conotoxin PnMRCL-022">
    <location>
        <begin position="48"/>
        <end position="60"/>
    </location>
</feature>
<evidence type="ECO:0000250" key="1"/>
<evidence type="ECO:0000255" key="2"/>
<evidence type="ECO:0000305" key="3"/>
<evidence type="ECO:0000305" key="4">
    <source>
    </source>
</evidence>
<evidence type="ECO:0000312" key="5">
    <source>
        <dbReference type="EMBL" id="AAG60383.1"/>
    </source>
</evidence>